<accession>Q8YIG3</accession>
<proteinExistence type="inferred from homology"/>
<protein>
    <recommendedName>
        <fullName evidence="1">Large ribosomal subunit protein bL25</fullName>
    </recommendedName>
    <alternativeName>
        <fullName evidence="2">50S ribosomal protein L25</fullName>
    </alternativeName>
    <alternativeName>
        <fullName evidence="1">General stress protein CTC</fullName>
    </alternativeName>
</protein>
<gene>
    <name evidence="1" type="primary">rplY</name>
    <name evidence="1" type="synonym">ctc</name>
    <name type="ordered locus">BMEI0481</name>
</gene>
<comment type="function">
    <text evidence="1">This is one of the proteins that binds to the 5S RNA in the ribosome where it forms part of the central protuberance.</text>
</comment>
<comment type="subunit">
    <text evidence="1">Part of the 50S ribosomal subunit; part of the 5S rRNA/L5/L18/L25 subcomplex. Contacts the 5S rRNA. Binds to the 5S rRNA independently of L5 and L18.</text>
</comment>
<comment type="similarity">
    <text evidence="1">Belongs to the bacterial ribosomal protein bL25 family. CTC subfamily.</text>
</comment>
<comment type="sequence caution" evidence="2">
    <conflict type="erroneous initiation">
        <sequence resource="EMBL-CDS" id="AAL51662"/>
    </conflict>
</comment>
<dbReference type="EMBL" id="AE008917">
    <property type="protein sequence ID" value="AAL51662.1"/>
    <property type="status" value="ALT_INIT"/>
    <property type="molecule type" value="Genomic_DNA"/>
</dbReference>
<dbReference type="PIR" id="AC3312">
    <property type="entry name" value="AC3312"/>
</dbReference>
<dbReference type="RefSeq" id="WP_002964640.1">
    <property type="nucleotide sequence ID" value="NZ_GG703780.1"/>
</dbReference>
<dbReference type="SMR" id="Q8YIG3"/>
<dbReference type="KEGG" id="bme:BMEI0481"/>
<dbReference type="KEGG" id="bmel:DK63_941"/>
<dbReference type="PATRIC" id="fig|224914.52.peg.994"/>
<dbReference type="eggNOG" id="COG1825">
    <property type="taxonomic scope" value="Bacteria"/>
</dbReference>
<dbReference type="PhylomeDB" id="Q8YIG3"/>
<dbReference type="Proteomes" id="UP000000419">
    <property type="component" value="Chromosome I"/>
</dbReference>
<dbReference type="GO" id="GO:0022625">
    <property type="term" value="C:cytosolic large ribosomal subunit"/>
    <property type="evidence" value="ECO:0007669"/>
    <property type="project" value="TreeGrafter"/>
</dbReference>
<dbReference type="GO" id="GO:0008097">
    <property type="term" value="F:5S rRNA binding"/>
    <property type="evidence" value="ECO:0007669"/>
    <property type="project" value="InterPro"/>
</dbReference>
<dbReference type="GO" id="GO:0003735">
    <property type="term" value="F:structural constituent of ribosome"/>
    <property type="evidence" value="ECO:0007669"/>
    <property type="project" value="InterPro"/>
</dbReference>
<dbReference type="GO" id="GO:0006412">
    <property type="term" value="P:translation"/>
    <property type="evidence" value="ECO:0007669"/>
    <property type="project" value="UniProtKB-UniRule"/>
</dbReference>
<dbReference type="CDD" id="cd00495">
    <property type="entry name" value="Ribosomal_L25_TL5_CTC"/>
    <property type="match status" value="1"/>
</dbReference>
<dbReference type="Gene3D" id="2.170.120.20">
    <property type="entry name" value="Ribosomal protein L25, beta domain"/>
    <property type="match status" value="1"/>
</dbReference>
<dbReference type="Gene3D" id="2.40.240.10">
    <property type="entry name" value="Ribosomal Protein L25, Chain P"/>
    <property type="match status" value="1"/>
</dbReference>
<dbReference type="HAMAP" id="MF_01334">
    <property type="entry name" value="Ribosomal_bL25_CTC"/>
    <property type="match status" value="1"/>
</dbReference>
<dbReference type="InterPro" id="IPR020056">
    <property type="entry name" value="Rbsml_bL25/Gln-tRNA_synth_N"/>
</dbReference>
<dbReference type="InterPro" id="IPR011035">
    <property type="entry name" value="Ribosomal_bL25/Gln-tRNA_synth"/>
</dbReference>
<dbReference type="InterPro" id="IPR020057">
    <property type="entry name" value="Ribosomal_bL25_b-dom"/>
</dbReference>
<dbReference type="InterPro" id="IPR037121">
    <property type="entry name" value="Ribosomal_bL25_C"/>
</dbReference>
<dbReference type="InterPro" id="IPR001021">
    <property type="entry name" value="Ribosomal_bL25_long"/>
</dbReference>
<dbReference type="InterPro" id="IPR029751">
    <property type="entry name" value="Ribosomal_L25_dom"/>
</dbReference>
<dbReference type="InterPro" id="IPR020930">
    <property type="entry name" value="Ribosomal_uL5_bac-type"/>
</dbReference>
<dbReference type="NCBIfam" id="TIGR00731">
    <property type="entry name" value="bL25_bact_ctc"/>
    <property type="match status" value="1"/>
</dbReference>
<dbReference type="NCBIfam" id="NF004128">
    <property type="entry name" value="PRK05618.1-2"/>
    <property type="match status" value="1"/>
</dbReference>
<dbReference type="NCBIfam" id="NF004612">
    <property type="entry name" value="PRK05943.1"/>
    <property type="match status" value="1"/>
</dbReference>
<dbReference type="PANTHER" id="PTHR33284">
    <property type="entry name" value="RIBOSOMAL PROTEIN L25/GLN-TRNA SYNTHETASE, ANTI-CODON-BINDING DOMAIN-CONTAINING PROTEIN"/>
    <property type="match status" value="1"/>
</dbReference>
<dbReference type="PANTHER" id="PTHR33284:SF1">
    <property type="entry name" value="RIBOSOMAL PROTEIN L25_GLN-TRNA SYNTHETASE, ANTI-CODON-BINDING DOMAIN-CONTAINING PROTEIN"/>
    <property type="match status" value="1"/>
</dbReference>
<dbReference type="Pfam" id="PF01386">
    <property type="entry name" value="Ribosomal_L25p"/>
    <property type="match status" value="1"/>
</dbReference>
<dbReference type="Pfam" id="PF14693">
    <property type="entry name" value="Ribosomal_TL5_C"/>
    <property type="match status" value="1"/>
</dbReference>
<dbReference type="SUPFAM" id="SSF50715">
    <property type="entry name" value="Ribosomal protein L25-like"/>
    <property type="match status" value="1"/>
</dbReference>
<feature type="chain" id="PRO_0000181525" description="Large ribosomal subunit protein bL25">
    <location>
        <begin position="1"/>
        <end position="207"/>
    </location>
</feature>
<keyword id="KW-0687">Ribonucleoprotein</keyword>
<keyword id="KW-0689">Ribosomal protein</keyword>
<keyword id="KW-0694">RNA-binding</keyword>
<keyword id="KW-0699">rRNA-binding</keyword>
<reference key="1">
    <citation type="journal article" date="2002" name="Proc. Natl. Acad. Sci. U.S.A.">
        <title>The genome sequence of the facultative intracellular pathogen Brucella melitensis.</title>
        <authorList>
            <person name="DelVecchio V.G."/>
            <person name="Kapatral V."/>
            <person name="Redkar R.J."/>
            <person name="Patra G."/>
            <person name="Mujer C."/>
            <person name="Los T."/>
            <person name="Ivanova N."/>
            <person name="Anderson I."/>
            <person name="Bhattacharyya A."/>
            <person name="Lykidis A."/>
            <person name="Reznik G."/>
            <person name="Jablonski L."/>
            <person name="Larsen N."/>
            <person name="D'Souza M."/>
            <person name="Bernal A."/>
            <person name="Mazur M."/>
            <person name="Goltsman E."/>
            <person name="Selkov E."/>
            <person name="Elzer P.H."/>
            <person name="Hagius S."/>
            <person name="O'Callaghan D."/>
            <person name="Letesson J.-J."/>
            <person name="Haselkorn R."/>
            <person name="Kyrpides N.C."/>
            <person name="Overbeek R."/>
        </authorList>
    </citation>
    <scope>NUCLEOTIDE SEQUENCE [LARGE SCALE GENOMIC DNA]</scope>
    <source>
        <strain>ATCC 23456 / CCUG 17765 / NCTC 10094 / 16M</strain>
    </source>
</reference>
<sequence>MSETYVLKADLRTRVGKGSSRELRRNGQIPAVIYGDKQEPLAIAVSYKEIFYKIHGGGFKTTVATIEVDGKKIQVLPKDYQLDPVRDFPQHVDFLRVSAKSVVHVNVPVHFKNEEAAPGIKRGGVLNVVRHDVELIVPANAIPEALEIDLSGLEIGDSVHISAVKLPKGATPAIQDRDFTIATIAAPAGLKSEENAEGAAEEAKDGE</sequence>
<name>RL25_BRUME</name>
<organism>
    <name type="scientific">Brucella melitensis biotype 1 (strain ATCC 23456 / CCUG 17765 / NCTC 10094 / 16M)</name>
    <dbReference type="NCBI Taxonomy" id="224914"/>
    <lineage>
        <taxon>Bacteria</taxon>
        <taxon>Pseudomonadati</taxon>
        <taxon>Pseudomonadota</taxon>
        <taxon>Alphaproteobacteria</taxon>
        <taxon>Hyphomicrobiales</taxon>
        <taxon>Brucellaceae</taxon>
        <taxon>Brucella/Ochrobactrum group</taxon>
        <taxon>Brucella</taxon>
    </lineage>
</organism>
<evidence type="ECO:0000255" key="1">
    <source>
        <dbReference type="HAMAP-Rule" id="MF_01334"/>
    </source>
</evidence>
<evidence type="ECO:0000305" key="2"/>